<comment type="function">
    <text evidence="1">Catalyzes the hydrolysis of N-succinyl-L,L-diaminopimelic acid (SDAP), forming succinate and LL-2,6-diaminopimelate (DAP), an intermediate involved in the bacterial biosynthesis of lysine and meso-diaminopimelic acid, an essential component of bacterial cell walls.</text>
</comment>
<comment type="catalytic activity">
    <reaction evidence="1">
        <text>N-succinyl-(2S,6S)-2,6-diaminopimelate + H2O = (2S,6S)-2,6-diaminopimelate + succinate</text>
        <dbReference type="Rhea" id="RHEA:22608"/>
        <dbReference type="ChEBI" id="CHEBI:15377"/>
        <dbReference type="ChEBI" id="CHEBI:30031"/>
        <dbReference type="ChEBI" id="CHEBI:57609"/>
        <dbReference type="ChEBI" id="CHEBI:58087"/>
        <dbReference type="EC" id="3.5.1.18"/>
    </reaction>
</comment>
<comment type="cofactor">
    <cofactor evidence="1">
        <name>Zn(2+)</name>
        <dbReference type="ChEBI" id="CHEBI:29105"/>
    </cofactor>
    <cofactor evidence="1">
        <name>Co(2+)</name>
        <dbReference type="ChEBI" id="CHEBI:48828"/>
    </cofactor>
    <text evidence="1">Binds 2 Zn(2+) or Co(2+) ions per subunit.</text>
</comment>
<comment type="pathway">
    <text evidence="1">Amino-acid biosynthesis; L-lysine biosynthesis via DAP pathway; LL-2,6-diaminopimelate from (S)-tetrahydrodipicolinate (succinylase route): step 3/3.</text>
</comment>
<comment type="subunit">
    <text evidence="1">Homodimer.</text>
</comment>
<comment type="similarity">
    <text evidence="1">Belongs to the peptidase M20A family. DapE subfamily.</text>
</comment>
<comment type="sequence caution" evidence="2">
    <conflict type="erroneous initiation">
        <sequence resource="EMBL-CDS" id="ABC36363"/>
    </conflict>
</comment>
<proteinExistence type="inferred from homology"/>
<feature type="chain" id="PRO_0000375513" description="Succinyl-diaminopimelate desuccinylase">
    <location>
        <begin position="1"/>
        <end position="379"/>
    </location>
</feature>
<feature type="active site" evidence="1">
    <location>
        <position position="72"/>
    </location>
</feature>
<feature type="active site" description="Proton acceptor" evidence="1">
    <location>
        <position position="137"/>
    </location>
</feature>
<feature type="binding site" evidence="1">
    <location>
        <position position="70"/>
    </location>
    <ligand>
        <name>Zn(2+)</name>
        <dbReference type="ChEBI" id="CHEBI:29105"/>
        <label>1</label>
    </ligand>
</feature>
<feature type="binding site" evidence="1">
    <location>
        <position position="103"/>
    </location>
    <ligand>
        <name>Zn(2+)</name>
        <dbReference type="ChEBI" id="CHEBI:29105"/>
        <label>1</label>
    </ligand>
</feature>
<feature type="binding site" evidence="1">
    <location>
        <position position="103"/>
    </location>
    <ligand>
        <name>Zn(2+)</name>
        <dbReference type="ChEBI" id="CHEBI:29105"/>
        <label>2</label>
    </ligand>
</feature>
<feature type="binding site" evidence="1">
    <location>
        <position position="138"/>
    </location>
    <ligand>
        <name>Zn(2+)</name>
        <dbReference type="ChEBI" id="CHEBI:29105"/>
        <label>2</label>
    </ligand>
</feature>
<feature type="binding site" evidence="1">
    <location>
        <position position="166"/>
    </location>
    <ligand>
        <name>Zn(2+)</name>
        <dbReference type="ChEBI" id="CHEBI:29105"/>
        <label>1</label>
    </ligand>
</feature>
<feature type="binding site" evidence="1">
    <location>
        <position position="352"/>
    </location>
    <ligand>
        <name>Zn(2+)</name>
        <dbReference type="ChEBI" id="CHEBI:29105"/>
        <label>2</label>
    </ligand>
</feature>
<gene>
    <name evidence="1" type="primary">dapE</name>
    <name type="ordered locus">BTH_I2014</name>
</gene>
<sequence>MSATLALTEQLIARASVTPDDQHCQQLMIERLAALGFECETIASHGVTNFWAVKRGTAGREGKLLAFAGHTDVVPTGPLEQWSSPPFVPTHRDGKLYGRGAADMKASLAGFVVAAEEFVAAHPQHRGSIGFLITSDEEGPATDGTVKVVEALAARGERLDYCIVGEPTSTATLGDVVKNGRRGSMSGELVVKGVQGHIAYPHLAKNPIHLLAPALAELAAEQWDEGNEYFPPTTWQVSNLRAGTGATNVIPGHADLLFNFRFSTASTVEGLQARVHAILDKHGLDYALNWSVSGLPFLTPRGELSNALDAAIRAETGLSPELSTTGGTSDGRFIARICPQVIEFGPPNASIHKIDEHIEVRFVEPLKNVYRRVLEQLIA</sequence>
<accession>Q2SX11</accession>
<reference key="1">
    <citation type="journal article" date="2005" name="BMC Genomics">
        <title>Bacterial genome adaptation to niches: divergence of the potential virulence genes in three Burkholderia species of different survival strategies.</title>
        <authorList>
            <person name="Kim H.S."/>
            <person name="Schell M.A."/>
            <person name="Yu Y."/>
            <person name="Ulrich R.L."/>
            <person name="Sarria S.H."/>
            <person name="Nierman W.C."/>
            <person name="DeShazer D."/>
        </authorList>
    </citation>
    <scope>NUCLEOTIDE SEQUENCE [LARGE SCALE GENOMIC DNA]</scope>
    <source>
        <strain>ATCC 700388 / DSM 13276 / CCUG 48851 / CIP 106301 / E264</strain>
    </source>
</reference>
<keyword id="KW-0028">Amino-acid biosynthesis</keyword>
<keyword id="KW-0170">Cobalt</keyword>
<keyword id="KW-0220">Diaminopimelate biosynthesis</keyword>
<keyword id="KW-0378">Hydrolase</keyword>
<keyword id="KW-0457">Lysine biosynthesis</keyword>
<keyword id="KW-0479">Metal-binding</keyword>
<keyword id="KW-0862">Zinc</keyword>
<evidence type="ECO:0000255" key="1">
    <source>
        <dbReference type="HAMAP-Rule" id="MF_01690"/>
    </source>
</evidence>
<evidence type="ECO:0000305" key="2"/>
<protein>
    <recommendedName>
        <fullName evidence="1">Succinyl-diaminopimelate desuccinylase</fullName>
        <shortName evidence="1">SDAP desuccinylase</shortName>
        <ecNumber evidence="1">3.5.1.18</ecNumber>
    </recommendedName>
    <alternativeName>
        <fullName evidence="1">N-succinyl-LL-2,6-diaminoheptanedioate amidohydrolase</fullName>
    </alternativeName>
</protein>
<name>DAPE_BURTA</name>
<organism>
    <name type="scientific">Burkholderia thailandensis (strain ATCC 700388 / DSM 13276 / CCUG 48851 / CIP 106301 / E264)</name>
    <dbReference type="NCBI Taxonomy" id="271848"/>
    <lineage>
        <taxon>Bacteria</taxon>
        <taxon>Pseudomonadati</taxon>
        <taxon>Pseudomonadota</taxon>
        <taxon>Betaproteobacteria</taxon>
        <taxon>Burkholderiales</taxon>
        <taxon>Burkholderiaceae</taxon>
        <taxon>Burkholderia</taxon>
        <taxon>pseudomallei group</taxon>
    </lineage>
</organism>
<dbReference type="EC" id="3.5.1.18" evidence="1"/>
<dbReference type="EMBL" id="CP000086">
    <property type="protein sequence ID" value="ABC36363.1"/>
    <property type="status" value="ALT_INIT"/>
    <property type="molecule type" value="Genomic_DNA"/>
</dbReference>
<dbReference type="RefSeq" id="WP_009890414.1">
    <property type="nucleotide sequence ID" value="NZ_CP008785.1"/>
</dbReference>
<dbReference type="SMR" id="Q2SX11"/>
<dbReference type="GeneID" id="45121744"/>
<dbReference type="KEGG" id="bte:BTH_I2014"/>
<dbReference type="HOGENOM" id="CLU_021802_4_0_4"/>
<dbReference type="UniPathway" id="UPA00034">
    <property type="reaction ID" value="UER00021"/>
</dbReference>
<dbReference type="Proteomes" id="UP000001930">
    <property type="component" value="Chromosome I"/>
</dbReference>
<dbReference type="GO" id="GO:0008777">
    <property type="term" value="F:acetylornithine deacetylase activity"/>
    <property type="evidence" value="ECO:0007669"/>
    <property type="project" value="TreeGrafter"/>
</dbReference>
<dbReference type="GO" id="GO:0050897">
    <property type="term" value="F:cobalt ion binding"/>
    <property type="evidence" value="ECO:0007669"/>
    <property type="project" value="UniProtKB-UniRule"/>
</dbReference>
<dbReference type="GO" id="GO:0009014">
    <property type="term" value="F:succinyl-diaminopimelate desuccinylase activity"/>
    <property type="evidence" value="ECO:0007669"/>
    <property type="project" value="UniProtKB-UniRule"/>
</dbReference>
<dbReference type="GO" id="GO:0008270">
    <property type="term" value="F:zinc ion binding"/>
    <property type="evidence" value="ECO:0007669"/>
    <property type="project" value="UniProtKB-UniRule"/>
</dbReference>
<dbReference type="GO" id="GO:0019877">
    <property type="term" value="P:diaminopimelate biosynthetic process"/>
    <property type="evidence" value="ECO:0007669"/>
    <property type="project" value="UniProtKB-UniRule"/>
</dbReference>
<dbReference type="GO" id="GO:0006526">
    <property type="term" value="P:L-arginine biosynthetic process"/>
    <property type="evidence" value="ECO:0007669"/>
    <property type="project" value="TreeGrafter"/>
</dbReference>
<dbReference type="GO" id="GO:0009089">
    <property type="term" value="P:lysine biosynthetic process via diaminopimelate"/>
    <property type="evidence" value="ECO:0007669"/>
    <property type="project" value="UniProtKB-UniRule"/>
</dbReference>
<dbReference type="CDD" id="cd03891">
    <property type="entry name" value="M20_DapE_proteobac"/>
    <property type="match status" value="1"/>
</dbReference>
<dbReference type="FunFam" id="3.30.70.360:FF:000011">
    <property type="entry name" value="Succinyl-diaminopimelate desuccinylase"/>
    <property type="match status" value="1"/>
</dbReference>
<dbReference type="FunFam" id="3.40.630.10:FF:000005">
    <property type="entry name" value="Succinyl-diaminopimelate desuccinylase"/>
    <property type="match status" value="1"/>
</dbReference>
<dbReference type="Gene3D" id="3.40.630.10">
    <property type="entry name" value="Zn peptidases"/>
    <property type="match status" value="2"/>
</dbReference>
<dbReference type="HAMAP" id="MF_01690">
    <property type="entry name" value="DapE"/>
    <property type="match status" value="1"/>
</dbReference>
<dbReference type="InterPro" id="IPR001261">
    <property type="entry name" value="ArgE/DapE_CS"/>
</dbReference>
<dbReference type="InterPro" id="IPR036264">
    <property type="entry name" value="Bact_exopeptidase_dim_dom"/>
</dbReference>
<dbReference type="InterPro" id="IPR005941">
    <property type="entry name" value="DapE_proteobac"/>
</dbReference>
<dbReference type="InterPro" id="IPR002933">
    <property type="entry name" value="Peptidase_M20"/>
</dbReference>
<dbReference type="InterPro" id="IPR011650">
    <property type="entry name" value="Peptidase_M20_dimer"/>
</dbReference>
<dbReference type="InterPro" id="IPR050072">
    <property type="entry name" value="Peptidase_M20A"/>
</dbReference>
<dbReference type="NCBIfam" id="TIGR01246">
    <property type="entry name" value="dapE_proteo"/>
    <property type="match status" value="1"/>
</dbReference>
<dbReference type="NCBIfam" id="NF009557">
    <property type="entry name" value="PRK13009.1"/>
    <property type="match status" value="1"/>
</dbReference>
<dbReference type="PANTHER" id="PTHR43808">
    <property type="entry name" value="ACETYLORNITHINE DEACETYLASE"/>
    <property type="match status" value="1"/>
</dbReference>
<dbReference type="PANTHER" id="PTHR43808:SF31">
    <property type="entry name" value="N-ACETYL-L-CITRULLINE DEACETYLASE"/>
    <property type="match status" value="1"/>
</dbReference>
<dbReference type="Pfam" id="PF07687">
    <property type="entry name" value="M20_dimer"/>
    <property type="match status" value="1"/>
</dbReference>
<dbReference type="Pfam" id="PF01546">
    <property type="entry name" value="Peptidase_M20"/>
    <property type="match status" value="1"/>
</dbReference>
<dbReference type="SUPFAM" id="SSF55031">
    <property type="entry name" value="Bacterial exopeptidase dimerisation domain"/>
    <property type="match status" value="1"/>
</dbReference>
<dbReference type="SUPFAM" id="SSF53187">
    <property type="entry name" value="Zn-dependent exopeptidases"/>
    <property type="match status" value="1"/>
</dbReference>
<dbReference type="PROSITE" id="PS00758">
    <property type="entry name" value="ARGE_DAPE_CPG2_1"/>
    <property type="match status" value="1"/>
</dbReference>
<dbReference type="PROSITE" id="PS00759">
    <property type="entry name" value="ARGE_DAPE_CPG2_2"/>
    <property type="match status" value="1"/>
</dbReference>